<evidence type="ECO:0000250" key="1"/>
<evidence type="ECO:0000255" key="2">
    <source>
        <dbReference type="HAMAP-Rule" id="MF_04099"/>
    </source>
</evidence>
<evidence type="ECO:0000255" key="3">
    <source>
        <dbReference type="PROSITE-ProRule" id="PRU01269"/>
    </source>
</evidence>
<evidence type="ECO:0000255" key="4">
    <source>
        <dbReference type="PROSITE-ProRule" id="PRU01270"/>
    </source>
</evidence>
<name>SPIKE_CVBM</name>
<gene>
    <name evidence="2" type="primary">S</name>
    <name type="ORF">3</name>
</gene>
<sequence length="1363" mass="150810">MFLILLISLPMAFAVIGDLKCTTVSINDVDTGAPSISTDIVDVTNGLGTYYVLDRVYLNTTLLLNGYYPTSGSTYRNMALKGTLLLSRLWFKPPFLSDFINGIFAKVKNTKVIKKGVMYSEFPAITIGSTFVNTSYSVVVQPHTTNLDNKLQGLLEISVCQYTMCEYPHTICHPNLGNKRVELWHWDTGVVSCLYKRNFTYDVNADYLYFHFYQEGGTFYAYFTDTGVVTKFLFNVYLGTVLSHYYVLPLTCSSAMTLEYWVTPLTSKQYLLAFNQDGVIFNAVDCKSDFMSEIKCKTLSIAPSTGVYELNGYTVQPIADVYRRIPNLPDCNIEAWLNDKSVPSPLNWERKTFSNCNFNMSSLMSFIQADSFTCNNIDAAKIYGMCFSSITIDKFAIPNGRKVDLQLGNLGYLQSFNYRIDTTATSCQLYYNLPAANVSVSRFNPSTWNRRFGFTEQFVFKPQPVGVFTHHDVVYAQHCFKAPSNFCPCKLDGSLCVGNGPGIDAGYKNSGIGTCPAGTNYLTCHNAAQCNCLCTPDPITSKSTGPYKCPQTKYLVGIGEHCSGLAIKSDYCGGNPCTCQPQAFLGWSVDSCLQGDRCNIFANFILHDVNSGTTCSTDLQKSNTDIILGVCVNYDLYGITGQGIFVEVNATYYNSWQNLLYDSNGNLYGFRDYLTNRTFMIRSCYSGRVSAAFHANSSEPALLFRNIKCNYVFNNTLSRQLQPINYFDSYLGCVVNADNSTSSVVQTCDLTVGSGYCVDYSTKRRSRRAITTGYRFTTFEPFTVNSVNDSLEPVGGLYEIQIPSEFTIGNMEEFIQTSSPKVTIDCSAFVCGDYAACKSQLVEYGSFCDNINAILTEVNELLDTTQLQVANSLMNGVTLSTKLKDGVNFNVDDINFSPVLGCLGSDCNKVSSRSAIEDLLFSKVKLSDVGFVEAYNNCTGGAEIRDLICVQSYNGIKVLPPLLSVNQISGYTLAATSASLFPPLSAAVGVPFYLNVQYRINGIGVTMDVLSQNQKLIANAFNNALDAIQEGFDATNSALVKIQAVVNANAEALNNLLQQLSNRFGAISSSLQEILSRLDALEAQAQIDRLINGRLTALNVYVSQQLSDSTLVKFSAAQAMEKVNECVKSQSSRINFCGNGNHIISLVQNAPYGLYFIHFSYVPTKYVTAKVSPGLCIAGDRGIAPKSGYFVNVNNTWMFTGSGYYYPEPITGNNVVVMSTCAVNYTKAPDVMLNISTPNLHDFKEELDQWFKNQTSVAPDLSLDYINVTFLDLQDEMNRLQEAIKVLNQSYINLKDIGTYEYYVKWPWYVWLLIGFAGVAMLVLLFFICCCTGCGTSCFKICGGCCDDYTGHQELVIKTSHDD</sequence>
<comment type="function">
    <molecule>Spike protein S1</molecule>
    <text evidence="2">Attaches the virion to the cell membrane by interacting with host receptor, initiating the infection.</text>
</comment>
<comment type="function">
    <molecule>Spike protein S2</molecule>
    <text evidence="2">Mediates fusion of the virion and cellular membranes by acting as a class I viral fusion protein. Under the current model, the protein has at least three conformational states: pre-fusion native state, pre-hairpin intermediate state, and post-fusion hairpin state. During viral and target cell membrane fusion, the coiled coil regions (heptad repeats) assume a trimer-of-hairpins structure, positioning the fusion peptide in close proximity to the C-terminal region of the ectodomain. The formation of this structure appears to drive apposition and subsequent fusion of viral and target cell membranes.</text>
</comment>
<comment type="function">
    <molecule>Spike protein S2'</molecule>
    <text evidence="2">Acts as a viral fusion peptide which is unmasked following S2 cleavage occurring upon virus endocytosis.</text>
</comment>
<comment type="subunit">
    <text evidence="2">Homotrimer; each monomer consists of a S1 and a S2 subunit. The resulting peplomers protrude from the virus surface as spikes.</text>
</comment>
<comment type="subcellular location">
    <subcellularLocation>
        <location evidence="2">Virion membrane</location>
        <topology evidence="2">Single-pass type I membrane protein</topology>
    </subcellularLocation>
    <subcellularLocation>
        <location evidence="2">Host endoplasmic reticulum-Golgi intermediate compartment membrane</location>
        <topology evidence="2">Single-pass type I membrane protein</topology>
    </subcellularLocation>
    <subcellularLocation>
        <location evidence="2">Host cell membrane</location>
        <topology evidence="2">Single-pass type I membrane protein</topology>
    </subcellularLocation>
    <text evidence="2">Accumulates in the endoplasmic reticulum-Golgi intermediate compartment, where it participates in virus particle assembly. Some S oligomers are transported to the host plasma membrane, where they may mediate cell-cell fusion.</text>
</comment>
<comment type="domain">
    <text evidence="2">Fusion peptide 1 (FP1) and fusion peptide 2 (FP2) function cooperatively and have a membrane-ordering effect on lipid headgroups and shallow hydrophobic regions of target bilayers. They are considered as two domains of an extended, bipartite FP. The membrane-ordering activity is calcium-dependent and also dependent on correct folding, which is maintained by an internal disulfide bond in FP2.</text>
</comment>
<comment type="PTM">
    <text evidence="2">Specific enzymatic cleavages in vivo yield mature proteins. The precursor is processed into S1 and S2 by host cell furin or another cellular protease to yield the mature S1 and S2 proteins. Additionally, a second cleavage leads to the release of a fusion peptide after viral attachment to host cell receptor.</text>
</comment>
<comment type="PTM">
    <text evidence="2">The cytoplasmic Cys-rich domain is palmitoylated. Spike glycoprotein is digested within host endosomes.</text>
</comment>
<comment type="similarity">
    <text evidence="2">Belongs to the betacoronaviruses spike protein family.</text>
</comment>
<reference key="1">
    <citation type="journal article" date="1990" name="Virology">
        <title>Deduced sequence of the bovine coronavirus spike protein and identification of the internal proteolytic cleavage site.</title>
        <authorList>
            <person name="Abraham S."/>
            <person name="Kienzle T.E."/>
            <person name="Lapps W.E."/>
            <person name="Brian D.A."/>
        </authorList>
    </citation>
    <scope>NUCLEOTIDE SEQUENCE [GENOMIC RNA]</scope>
</reference>
<reference key="2">
    <citation type="journal article" date="1990" name="Virology">
        <title>Sequence and expression analysis of potential nonstructural proteins of 4.9, 4.8, 12.7, and 9.5 kDa encoded between the spike and membrane protein genes of the bovine coronavirus.</title>
        <authorList>
            <person name="Abraham S."/>
            <person name="Kienzle T.E."/>
            <person name="Lapps W.E."/>
            <person name="Brian D.A."/>
        </authorList>
    </citation>
    <scope>NUCLEOTIDE SEQUENCE [GENOMIC RNA] OF 1254-1363</scope>
</reference>
<organismHost>
    <name type="scientific">Bos taurus</name>
    <name type="common">Bovine</name>
    <dbReference type="NCBI Taxonomy" id="9913"/>
</organismHost>
<keyword id="KW-0175">Coiled coil</keyword>
<keyword id="KW-1015">Disulfide bond</keyword>
<keyword id="KW-1170">Fusion of virus membrane with host endosomal membrane</keyword>
<keyword id="KW-1168">Fusion of virus membrane with host membrane</keyword>
<keyword id="KW-0325">Glycoprotein</keyword>
<keyword id="KW-1032">Host cell membrane</keyword>
<keyword id="KW-1043">Host membrane</keyword>
<keyword id="KW-0945">Host-virus interaction</keyword>
<keyword id="KW-0449">Lipoprotein</keyword>
<keyword id="KW-0472">Membrane</keyword>
<keyword id="KW-0564">Palmitate</keyword>
<keyword id="KW-0732">Signal</keyword>
<keyword id="KW-0812">Transmembrane</keyword>
<keyword id="KW-1133">Transmembrane helix</keyword>
<keyword id="KW-1161">Viral attachment to host cell</keyword>
<keyword id="KW-0261">Viral envelope protein</keyword>
<keyword id="KW-1162">Viral penetration into host cytoplasm</keyword>
<keyword id="KW-0946">Virion</keyword>
<keyword id="KW-0843">Virulence</keyword>
<keyword id="KW-1160">Virus entry into host cell</keyword>
<proteinExistence type="inferred from homology"/>
<protein>
    <recommendedName>
        <fullName evidence="2">Spike glycoprotein</fullName>
        <shortName evidence="2">S glycoprotein</shortName>
    </recommendedName>
    <alternativeName>
        <fullName evidence="2">E2</fullName>
    </alternativeName>
    <alternativeName>
        <fullName evidence="2">Peplomer protein</fullName>
    </alternativeName>
    <component>
        <recommendedName>
            <fullName evidence="2">Spike protein S1</fullName>
        </recommendedName>
    </component>
    <component>
        <recommendedName>
            <fullName evidence="2">Spike protein S2</fullName>
        </recommendedName>
    </component>
    <component>
        <recommendedName>
            <fullName evidence="2">Spike protein S2'</fullName>
        </recommendedName>
    </component>
</protein>
<dbReference type="EMBL" id="U00735">
    <property type="protein sequence ID" value="AAA66399.1"/>
    <property type="molecule type" value="Genomic_RNA"/>
</dbReference>
<dbReference type="PIR" id="A34607">
    <property type="entry name" value="VGIHNM"/>
</dbReference>
<dbReference type="SMR" id="P15777"/>
<dbReference type="GlyCosmos" id="P15777">
    <property type="glycosylation" value="18 sites, No reported glycans"/>
</dbReference>
<dbReference type="Proteomes" id="UP000007554">
    <property type="component" value="Genome"/>
</dbReference>
<dbReference type="GO" id="GO:0044173">
    <property type="term" value="C:host cell endoplasmic reticulum-Golgi intermediate compartment membrane"/>
    <property type="evidence" value="ECO:0007669"/>
    <property type="project" value="UniProtKB-SubCell"/>
</dbReference>
<dbReference type="GO" id="GO:0020002">
    <property type="term" value="C:host cell plasma membrane"/>
    <property type="evidence" value="ECO:0007669"/>
    <property type="project" value="UniProtKB-SubCell"/>
</dbReference>
<dbReference type="GO" id="GO:0016020">
    <property type="term" value="C:membrane"/>
    <property type="evidence" value="ECO:0007669"/>
    <property type="project" value="UniProtKB-UniRule"/>
</dbReference>
<dbReference type="GO" id="GO:0019031">
    <property type="term" value="C:viral envelope"/>
    <property type="evidence" value="ECO:0007669"/>
    <property type="project" value="UniProtKB-UniRule"/>
</dbReference>
<dbReference type="GO" id="GO:0055036">
    <property type="term" value="C:virion membrane"/>
    <property type="evidence" value="ECO:0007669"/>
    <property type="project" value="UniProtKB-SubCell"/>
</dbReference>
<dbReference type="GO" id="GO:0075509">
    <property type="term" value="P:endocytosis involved in viral entry into host cell"/>
    <property type="evidence" value="ECO:0007669"/>
    <property type="project" value="UniProtKB-UniRule"/>
</dbReference>
<dbReference type="GO" id="GO:0039654">
    <property type="term" value="P:fusion of virus membrane with host endosome membrane"/>
    <property type="evidence" value="ECO:0007669"/>
    <property type="project" value="UniProtKB-UniRule"/>
</dbReference>
<dbReference type="GO" id="GO:0019064">
    <property type="term" value="P:fusion of virus membrane with host plasma membrane"/>
    <property type="evidence" value="ECO:0007669"/>
    <property type="project" value="UniProtKB-UniRule"/>
</dbReference>
<dbReference type="GO" id="GO:0046813">
    <property type="term" value="P:receptor-mediated virion attachment to host cell"/>
    <property type="evidence" value="ECO:0007669"/>
    <property type="project" value="UniProtKB-UniRule"/>
</dbReference>
<dbReference type="CDD" id="cd21485">
    <property type="entry name" value="HCoV-OC43-like_Spike_S1_RBD"/>
    <property type="match status" value="1"/>
</dbReference>
<dbReference type="CDD" id="cd22380">
    <property type="entry name" value="HKU1-CoV-like_Spike_SD1-2_S1-S2_S2"/>
    <property type="match status" value="1"/>
</dbReference>
<dbReference type="CDD" id="cd21625">
    <property type="entry name" value="MHV-like_Spike_S1_NTD"/>
    <property type="match status" value="1"/>
</dbReference>
<dbReference type="FunFam" id="1.20.5.300:FF:000003">
    <property type="entry name" value="Spike glycoprotein"/>
    <property type="match status" value="1"/>
</dbReference>
<dbReference type="FunFam" id="1.20.5.300:FF:000006">
    <property type="entry name" value="Spike glycoprotein"/>
    <property type="match status" value="1"/>
</dbReference>
<dbReference type="FunFam" id="2.60.120.960:FF:000002">
    <property type="entry name" value="Spike glycoprotein"/>
    <property type="match status" value="1"/>
</dbReference>
<dbReference type="FunFam" id="3.30.70.1840:FF:000003">
    <property type="entry name" value="Spike glycoprotein"/>
    <property type="match status" value="1"/>
</dbReference>
<dbReference type="Gene3D" id="1.20.5.300">
    <property type="match status" value="2"/>
</dbReference>
<dbReference type="Gene3D" id="3.30.70.1840">
    <property type="match status" value="1"/>
</dbReference>
<dbReference type="Gene3D" id="2.60.120.960">
    <property type="entry name" value="Spike glycoprotein, N-terminal domain"/>
    <property type="match status" value="1"/>
</dbReference>
<dbReference type="HAMAP" id="MF_04099">
    <property type="entry name" value="BETA_CORONA_SPIKE"/>
    <property type="match status" value="1"/>
</dbReference>
<dbReference type="InterPro" id="IPR032500">
    <property type="entry name" value="bCoV_S1_N"/>
</dbReference>
<dbReference type="InterPro" id="IPR042578">
    <property type="entry name" value="BETA_CORONA_SPIKE"/>
</dbReference>
<dbReference type="InterPro" id="IPR043607">
    <property type="entry name" value="CoV_S1_C"/>
</dbReference>
<dbReference type="InterPro" id="IPR043473">
    <property type="entry name" value="S2_sf_CoV"/>
</dbReference>
<dbReference type="InterPro" id="IPR043002">
    <property type="entry name" value="Spike_N_sf"/>
</dbReference>
<dbReference type="InterPro" id="IPR044339">
    <property type="entry name" value="Spike_S1_NTD_MHV-like"/>
</dbReference>
<dbReference type="InterPro" id="IPR018548">
    <property type="entry name" value="Spike_S1_RBD_bCoV"/>
</dbReference>
<dbReference type="InterPro" id="IPR044372">
    <property type="entry name" value="Spike_S1_RBD_HCoV-OC43-like"/>
</dbReference>
<dbReference type="InterPro" id="IPR036326">
    <property type="entry name" value="Spike_S1_RBD_sf_bCoV"/>
</dbReference>
<dbReference type="InterPro" id="IPR002552">
    <property type="entry name" value="Spike_S2_CoV"/>
</dbReference>
<dbReference type="InterPro" id="IPR043614">
    <property type="entry name" value="Spike_S2_CoV_C"/>
</dbReference>
<dbReference type="InterPro" id="IPR044873">
    <property type="entry name" value="Spike_S2_CoV_HR1"/>
</dbReference>
<dbReference type="InterPro" id="IPR044874">
    <property type="entry name" value="Spike_S2_CoV_HR2"/>
</dbReference>
<dbReference type="Pfam" id="PF16451">
    <property type="entry name" value="bCoV_S1_N"/>
    <property type="match status" value="1"/>
</dbReference>
<dbReference type="Pfam" id="PF09408">
    <property type="entry name" value="bCoV_S1_RBD"/>
    <property type="match status" value="1"/>
</dbReference>
<dbReference type="Pfam" id="PF19209">
    <property type="entry name" value="CoV_S1_C"/>
    <property type="match status" value="1"/>
</dbReference>
<dbReference type="Pfam" id="PF01601">
    <property type="entry name" value="CoV_S2"/>
    <property type="match status" value="1"/>
</dbReference>
<dbReference type="Pfam" id="PF19214">
    <property type="entry name" value="CoV_S2_C"/>
    <property type="match status" value="1"/>
</dbReference>
<dbReference type="SUPFAM" id="SSF111474">
    <property type="entry name" value="Coronavirus S2 glycoprotein"/>
    <property type="match status" value="2"/>
</dbReference>
<dbReference type="SUPFAM" id="SSF143587">
    <property type="entry name" value="SARS receptor-binding domain-like"/>
    <property type="match status" value="1"/>
</dbReference>
<dbReference type="PROSITE" id="PS51921">
    <property type="entry name" value="BCOV_S1_CTD"/>
    <property type="match status" value="1"/>
</dbReference>
<dbReference type="PROSITE" id="PS51922">
    <property type="entry name" value="BCOV_S1_NTD"/>
    <property type="match status" value="1"/>
</dbReference>
<dbReference type="PROSITE" id="PS51923">
    <property type="entry name" value="COV_S2_HR1"/>
    <property type="match status" value="1"/>
</dbReference>
<dbReference type="PROSITE" id="PS51924">
    <property type="entry name" value="COV_S2_HR2"/>
    <property type="match status" value="1"/>
</dbReference>
<accession>P15777</accession>
<organism>
    <name type="scientific">Bovine coronavirus (strain Mebus)</name>
    <name type="common">BCoV</name>
    <name type="synonym">BCV</name>
    <dbReference type="NCBI Taxonomy" id="11132"/>
    <lineage>
        <taxon>Viruses</taxon>
        <taxon>Riboviria</taxon>
        <taxon>Orthornavirae</taxon>
        <taxon>Pisuviricota</taxon>
        <taxon>Pisoniviricetes</taxon>
        <taxon>Nidovirales</taxon>
        <taxon>Cornidovirineae</taxon>
        <taxon>Coronaviridae</taxon>
        <taxon>Orthocoronavirinae</taxon>
        <taxon>Betacoronavirus</taxon>
        <taxon>Embecovirus</taxon>
        <taxon>Betacoronavirus 1</taxon>
    </lineage>
</organism>
<feature type="signal peptide" evidence="2">
    <location>
        <begin position="1"/>
        <end position="13"/>
    </location>
</feature>
<feature type="chain" id="PRO_0000037193" description="Spike glycoprotein">
    <location>
        <begin position="14"/>
        <end position="1363"/>
    </location>
</feature>
<feature type="chain" id="PRO_0000037194" description="Spike protein S1">
    <location>
        <begin position="14"/>
        <end position="768"/>
    </location>
</feature>
<feature type="chain" id="PRO_0000037195" description="Spike protein S2">
    <location>
        <begin position="769"/>
        <end position="1363"/>
    </location>
</feature>
<feature type="chain" id="PRO_0000444074" description="Spike protein S2'" evidence="2">
    <location>
        <begin position="914"/>
        <end position="1363"/>
    </location>
</feature>
<feature type="topological domain" description="Extracellular" evidence="2">
    <location>
        <begin position="14"/>
        <end position="1307"/>
    </location>
</feature>
<feature type="transmembrane region" description="Helical" evidence="2">
    <location>
        <begin position="1308"/>
        <end position="1328"/>
    </location>
</feature>
<feature type="topological domain" description="Cytoplasmic" evidence="2">
    <location>
        <begin position="1329"/>
        <end position="1363"/>
    </location>
</feature>
<feature type="domain" description="BetaCoV S1-NTD" evidence="4">
    <location>
        <begin position="15"/>
        <end position="298"/>
    </location>
</feature>
<feature type="domain" description="BetaCoV S1-CTD" evidence="3">
    <location>
        <begin position="329"/>
        <end position="617"/>
    </location>
</feature>
<feature type="region of interest" description="Fusion peptide 1" evidence="2">
    <location>
        <begin position="914"/>
        <end position="935"/>
    </location>
</feature>
<feature type="region of interest" description="Fusion peptide 2" evidence="2">
    <location>
        <begin position="933"/>
        <end position="953"/>
    </location>
</feature>
<feature type="region of interest" description="Heptad repeat 1" evidence="2">
    <location>
        <begin position="1014"/>
        <end position="1064"/>
    </location>
</feature>
<feature type="region of interest" description="Heptad repeat 2" evidence="2">
    <location>
        <begin position="1258"/>
        <end position="1296"/>
    </location>
</feature>
<feature type="coiled-coil region" evidence="2">
    <location>
        <begin position="1043"/>
        <end position="1087"/>
    </location>
</feature>
<feature type="coiled-coil region" evidence="2">
    <location>
        <begin position="1269"/>
        <end position="1297"/>
    </location>
</feature>
<feature type="short sequence motif" description="KxHxx" evidence="2">
    <location>
        <begin position="1359"/>
        <end position="1363"/>
    </location>
</feature>
<feature type="site" description="Cleavage; by host" evidence="1">
    <location>
        <begin position="768"/>
        <end position="769"/>
    </location>
</feature>
<feature type="site" description="Cleavage" evidence="2">
    <location>
        <begin position="913"/>
        <end position="914"/>
    </location>
</feature>
<feature type="glycosylation site" description="N-linked (GlcNAc...) asparagine; by host" evidence="2">
    <location>
        <position position="59"/>
    </location>
</feature>
<feature type="glycosylation site" description="N-linked (GlcNAc...) asparagine; by host" evidence="2">
    <location>
        <position position="133"/>
    </location>
</feature>
<feature type="glycosylation site" description="N-linked (GlcNAc...) asparagine; by host" evidence="2">
    <location>
        <position position="198"/>
    </location>
</feature>
<feature type="glycosylation site" description="N-linked (GlcNAc...) asparagine; by host" evidence="2">
    <location>
        <position position="359"/>
    </location>
</feature>
<feature type="glycosylation site" description="N-linked (GlcNAc...) asparagine; by host" evidence="2">
    <location>
        <position position="437"/>
    </location>
</feature>
<feature type="glycosylation site" description="N-linked (GlcNAc...) asparagine; by host" evidence="2">
    <location>
        <position position="649"/>
    </location>
</feature>
<feature type="glycosylation site" description="N-linked (GlcNAc...) asparagine; by host" evidence="2">
    <location>
        <position position="676"/>
    </location>
</feature>
<feature type="glycosylation site" description="N-linked (GlcNAc...) asparagine; by host" evidence="2">
    <location>
        <position position="696"/>
    </location>
</feature>
<feature type="glycosylation site" description="N-linked (GlcNAc...) asparagine; by host" evidence="2">
    <location>
        <position position="714"/>
    </location>
</feature>
<feature type="glycosylation site" description="N-linked (GlcNAc...) asparagine; by host" evidence="2">
    <location>
        <position position="739"/>
    </location>
</feature>
<feature type="glycosylation site" description="N-linked (GlcNAc...) asparagine; by host" evidence="2">
    <location>
        <position position="788"/>
    </location>
</feature>
<feature type="glycosylation site" description="N-linked (GlcNAc...) asparagine; by host" evidence="2">
    <location>
        <position position="937"/>
    </location>
</feature>
<feature type="glycosylation site" description="N-linked (GlcNAc...) asparagine; by host" evidence="2">
    <location>
        <position position="1194"/>
    </location>
</feature>
<feature type="glycosylation site" description="N-linked (GlcNAc...) asparagine; by host" evidence="2">
    <location>
        <position position="1224"/>
    </location>
</feature>
<feature type="glycosylation site" description="N-linked (GlcNAc...) asparagine; by host" evidence="2">
    <location>
        <position position="1234"/>
    </location>
</feature>
<feature type="glycosylation site" description="N-linked (GlcNAc...) asparagine; by host" evidence="2">
    <location>
        <position position="1253"/>
    </location>
</feature>
<feature type="glycosylation site" description="N-linked (GlcNAc...) asparagine; by host" evidence="2">
    <location>
        <position position="1267"/>
    </location>
</feature>
<feature type="glycosylation site" description="N-linked (GlcNAc...) asparagine; by host" evidence="2">
    <location>
        <position position="1288"/>
    </location>
</feature>
<feature type="disulfide bond" evidence="4">
    <location>
        <begin position="21"/>
        <end position="165"/>
    </location>
</feature>
<feature type="disulfide bond" evidence="4">
    <location>
        <begin position="160"/>
        <end position="193"/>
    </location>
</feature>
<feature type="disulfide bond" evidence="4">
    <location>
        <begin position="172"/>
        <end position="252"/>
    </location>
</feature>
<feature type="disulfide bond" evidence="4">
    <location>
        <begin position="286"/>
        <end position="296"/>
    </location>
</feature>
<feature type="disulfide bond" evidence="3">
    <location>
        <begin position="331"/>
        <end position="356"/>
    </location>
</feature>
<feature type="disulfide bond" evidence="3">
    <location>
        <begin position="374"/>
        <end position="427"/>
    </location>
</feature>
<feature type="disulfide bond" evidence="3">
    <location>
        <begin position="386"/>
        <end position="615"/>
    </location>
</feature>
<feature type="disulfide bond" evidence="2">
    <location>
        <begin position="938"/>
        <end position="949"/>
    </location>
</feature>